<gene>
    <name evidence="1" type="primary">nuoI</name>
    <name type="ordered locus">RER_27190</name>
</gene>
<organism>
    <name type="scientific">Rhodococcus erythropolis (strain PR4 / NBRC 100887)</name>
    <dbReference type="NCBI Taxonomy" id="234621"/>
    <lineage>
        <taxon>Bacteria</taxon>
        <taxon>Bacillati</taxon>
        <taxon>Actinomycetota</taxon>
        <taxon>Actinomycetes</taxon>
        <taxon>Mycobacteriales</taxon>
        <taxon>Nocardiaceae</taxon>
        <taxon>Rhodococcus</taxon>
        <taxon>Rhodococcus erythropolis group</taxon>
    </lineage>
</organism>
<feature type="chain" id="PRO_1000214850" description="NADH-quinone oxidoreductase subunit I">
    <location>
        <begin position="1"/>
        <end position="195"/>
    </location>
</feature>
<feature type="domain" description="4Fe-4S ferredoxin-type 1" evidence="1">
    <location>
        <begin position="44"/>
        <end position="74"/>
    </location>
</feature>
<feature type="domain" description="4Fe-4S ferredoxin-type 2" evidence="1">
    <location>
        <begin position="90"/>
        <end position="119"/>
    </location>
</feature>
<feature type="region of interest" description="Disordered" evidence="2">
    <location>
        <begin position="145"/>
        <end position="195"/>
    </location>
</feature>
<feature type="compositionally biased region" description="Low complexity" evidence="2">
    <location>
        <begin position="168"/>
        <end position="181"/>
    </location>
</feature>
<feature type="compositionally biased region" description="Basic and acidic residues" evidence="2">
    <location>
        <begin position="184"/>
        <end position="195"/>
    </location>
</feature>
<feature type="binding site" evidence="1">
    <location>
        <position position="54"/>
    </location>
    <ligand>
        <name>[4Fe-4S] cluster</name>
        <dbReference type="ChEBI" id="CHEBI:49883"/>
        <label>1</label>
    </ligand>
</feature>
<feature type="binding site" evidence="1">
    <location>
        <position position="57"/>
    </location>
    <ligand>
        <name>[4Fe-4S] cluster</name>
        <dbReference type="ChEBI" id="CHEBI:49883"/>
        <label>1</label>
    </ligand>
</feature>
<feature type="binding site" evidence="1">
    <location>
        <position position="60"/>
    </location>
    <ligand>
        <name>[4Fe-4S] cluster</name>
        <dbReference type="ChEBI" id="CHEBI:49883"/>
        <label>1</label>
    </ligand>
</feature>
<feature type="binding site" evidence="1">
    <location>
        <position position="64"/>
    </location>
    <ligand>
        <name>[4Fe-4S] cluster</name>
        <dbReference type="ChEBI" id="CHEBI:49883"/>
        <label>2</label>
    </ligand>
</feature>
<feature type="binding site" evidence="1">
    <location>
        <position position="99"/>
    </location>
    <ligand>
        <name>[4Fe-4S] cluster</name>
        <dbReference type="ChEBI" id="CHEBI:49883"/>
        <label>2</label>
    </ligand>
</feature>
<feature type="binding site" evidence="1">
    <location>
        <position position="102"/>
    </location>
    <ligand>
        <name>[4Fe-4S] cluster</name>
        <dbReference type="ChEBI" id="CHEBI:49883"/>
        <label>2</label>
    </ligand>
</feature>
<feature type="binding site" evidence="1">
    <location>
        <position position="105"/>
    </location>
    <ligand>
        <name>[4Fe-4S] cluster</name>
        <dbReference type="ChEBI" id="CHEBI:49883"/>
        <label>2</label>
    </ligand>
</feature>
<feature type="binding site" evidence="1">
    <location>
        <position position="109"/>
    </location>
    <ligand>
        <name>[4Fe-4S] cluster</name>
        <dbReference type="ChEBI" id="CHEBI:49883"/>
        <label>1</label>
    </ligand>
</feature>
<name>NUOI_RHOE4</name>
<reference key="1">
    <citation type="submission" date="2005-03" db="EMBL/GenBank/DDBJ databases">
        <title>Comparison of the complete genome sequences of Rhodococcus erythropolis PR4 and Rhodococcus opacus B4.</title>
        <authorList>
            <person name="Takarada H."/>
            <person name="Sekine M."/>
            <person name="Hosoyama A."/>
            <person name="Yamada R."/>
            <person name="Fujisawa T."/>
            <person name="Omata S."/>
            <person name="Shimizu A."/>
            <person name="Tsukatani N."/>
            <person name="Tanikawa S."/>
            <person name="Fujita N."/>
            <person name="Harayama S."/>
        </authorList>
    </citation>
    <scope>NUCLEOTIDE SEQUENCE [LARGE SCALE GENOMIC DNA]</scope>
    <source>
        <strain>PR4 / NBRC 100887</strain>
    </source>
</reference>
<protein>
    <recommendedName>
        <fullName evidence="1">NADH-quinone oxidoreductase subunit I</fullName>
        <ecNumber evidence="1">7.1.1.-</ecNumber>
    </recommendedName>
    <alternativeName>
        <fullName evidence="1">NADH dehydrogenase I subunit I</fullName>
    </alternativeName>
    <alternativeName>
        <fullName evidence="1">NDH-1 subunit I</fullName>
    </alternativeName>
</protein>
<evidence type="ECO:0000255" key="1">
    <source>
        <dbReference type="HAMAP-Rule" id="MF_01351"/>
    </source>
</evidence>
<evidence type="ECO:0000256" key="2">
    <source>
        <dbReference type="SAM" id="MobiDB-lite"/>
    </source>
</evidence>
<proteinExistence type="inferred from homology"/>
<dbReference type="EC" id="7.1.1.-" evidence="1"/>
<dbReference type="EMBL" id="AP008957">
    <property type="protein sequence ID" value="BAH33427.1"/>
    <property type="molecule type" value="Genomic_DNA"/>
</dbReference>
<dbReference type="RefSeq" id="WP_020907505.1">
    <property type="nucleotide sequence ID" value="NC_012490.1"/>
</dbReference>
<dbReference type="SMR" id="C0ZYJ2"/>
<dbReference type="KEGG" id="rer:RER_27190"/>
<dbReference type="PATRIC" id="fig|234621.6.peg.3208"/>
<dbReference type="eggNOG" id="COG1143">
    <property type="taxonomic scope" value="Bacteria"/>
</dbReference>
<dbReference type="HOGENOM" id="CLU_067218_4_0_11"/>
<dbReference type="Proteomes" id="UP000002204">
    <property type="component" value="Chromosome"/>
</dbReference>
<dbReference type="GO" id="GO:0005886">
    <property type="term" value="C:plasma membrane"/>
    <property type="evidence" value="ECO:0007669"/>
    <property type="project" value="UniProtKB-SubCell"/>
</dbReference>
<dbReference type="GO" id="GO:0051539">
    <property type="term" value="F:4 iron, 4 sulfur cluster binding"/>
    <property type="evidence" value="ECO:0007669"/>
    <property type="project" value="UniProtKB-KW"/>
</dbReference>
<dbReference type="GO" id="GO:0005506">
    <property type="term" value="F:iron ion binding"/>
    <property type="evidence" value="ECO:0007669"/>
    <property type="project" value="UniProtKB-UniRule"/>
</dbReference>
<dbReference type="GO" id="GO:0050136">
    <property type="term" value="F:NADH:ubiquinone reductase (non-electrogenic) activity"/>
    <property type="evidence" value="ECO:0007669"/>
    <property type="project" value="UniProtKB-UniRule"/>
</dbReference>
<dbReference type="GO" id="GO:0048038">
    <property type="term" value="F:quinone binding"/>
    <property type="evidence" value="ECO:0007669"/>
    <property type="project" value="UniProtKB-KW"/>
</dbReference>
<dbReference type="GO" id="GO:0009060">
    <property type="term" value="P:aerobic respiration"/>
    <property type="evidence" value="ECO:0007669"/>
    <property type="project" value="TreeGrafter"/>
</dbReference>
<dbReference type="FunFam" id="3.30.70.3270:FF:000007">
    <property type="entry name" value="NADH-quinone oxidoreductase subunit I"/>
    <property type="match status" value="1"/>
</dbReference>
<dbReference type="Gene3D" id="3.30.70.3270">
    <property type="match status" value="1"/>
</dbReference>
<dbReference type="HAMAP" id="MF_01351">
    <property type="entry name" value="NDH1_NuoI"/>
    <property type="match status" value="1"/>
</dbReference>
<dbReference type="InterPro" id="IPR017896">
    <property type="entry name" value="4Fe4S_Fe-S-bd"/>
</dbReference>
<dbReference type="InterPro" id="IPR017900">
    <property type="entry name" value="4Fe4S_Fe_S_CS"/>
</dbReference>
<dbReference type="InterPro" id="IPR010226">
    <property type="entry name" value="NADH_quinone_OxRdtase_chainI"/>
</dbReference>
<dbReference type="NCBIfam" id="TIGR01971">
    <property type="entry name" value="NuoI"/>
    <property type="match status" value="1"/>
</dbReference>
<dbReference type="NCBIfam" id="NF004537">
    <property type="entry name" value="PRK05888.1-3"/>
    <property type="match status" value="1"/>
</dbReference>
<dbReference type="PANTHER" id="PTHR10849:SF20">
    <property type="entry name" value="NADH DEHYDROGENASE [UBIQUINONE] IRON-SULFUR PROTEIN 8, MITOCHONDRIAL"/>
    <property type="match status" value="1"/>
</dbReference>
<dbReference type="PANTHER" id="PTHR10849">
    <property type="entry name" value="NADH DEHYDROGENASE UBIQUINONE IRON-SULFUR PROTEIN 8, MITOCHONDRIAL"/>
    <property type="match status" value="1"/>
</dbReference>
<dbReference type="Pfam" id="PF12838">
    <property type="entry name" value="Fer4_7"/>
    <property type="match status" value="1"/>
</dbReference>
<dbReference type="SUPFAM" id="SSF54862">
    <property type="entry name" value="4Fe-4S ferredoxins"/>
    <property type="match status" value="1"/>
</dbReference>
<dbReference type="PROSITE" id="PS00198">
    <property type="entry name" value="4FE4S_FER_1"/>
    <property type="match status" value="2"/>
</dbReference>
<dbReference type="PROSITE" id="PS51379">
    <property type="entry name" value="4FE4S_FER_2"/>
    <property type="match status" value="2"/>
</dbReference>
<comment type="function">
    <text evidence="1">NDH-1 shuttles electrons from NADH, via FMN and iron-sulfur (Fe-S) centers, to quinones in the respiratory chain. The immediate electron acceptor for the enzyme in this species is believed to be ubiquinone. Couples the redox reaction to proton translocation (for every two electrons transferred, four hydrogen ions are translocated across the cytoplasmic membrane), and thus conserves the redox energy in a proton gradient.</text>
</comment>
<comment type="catalytic activity">
    <reaction evidence="1">
        <text>a quinone + NADH + 5 H(+)(in) = a quinol + NAD(+) + 4 H(+)(out)</text>
        <dbReference type="Rhea" id="RHEA:57888"/>
        <dbReference type="ChEBI" id="CHEBI:15378"/>
        <dbReference type="ChEBI" id="CHEBI:24646"/>
        <dbReference type="ChEBI" id="CHEBI:57540"/>
        <dbReference type="ChEBI" id="CHEBI:57945"/>
        <dbReference type="ChEBI" id="CHEBI:132124"/>
    </reaction>
</comment>
<comment type="cofactor">
    <cofactor evidence="1">
        <name>[4Fe-4S] cluster</name>
        <dbReference type="ChEBI" id="CHEBI:49883"/>
    </cofactor>
    <text evidence="1">Binds 2 [4Fe-4S] clusters per subunit.</text>
</comment>
<comment type="subunit">
    <text evidence="1">NDH-1 is composed of 14 different subunits. Subunits NuoA, H, J, K, L, M, N constitute the membrane sector of the complex.</text>
</comment>
<comment type="subcellular location">
    <subcellularLocation>
        <location evidence="1">Cell membrane</location>
        <topology evidence="1">Peripheral membrane protein</topology>
    </subcellularLocation>
</comment>
<comment type="similarity">
    <text evidence="1">Belongs to the complex I 23 kDa subunit family.</text>
</comment>
<keyword id="KW-0004">4Fe-4S</keyword>
<keyword id="KW-1003">Cell membrane</keyword>
<keyword id="KW-0408">Iron</keyword>
<keyword id="KW-0411">Iron-sulfur</keyword>
<keyword id="KW-0472">Membrane</keyword>
<keyword id="KW-0479">Metal-binding</keyword>
<keyword id="KW-0520">NAD</keyword>
<keyword id="KW-0874">Quinone</keyword>
<keyword id="KW-0677">Repeat</keyword>
<keyword id="KW-1278">Translocase</keyword>
<keyword id="KW-0830">Ubiquinone</keyword>
<accession>C0ZYJ2</accession>
<sequence>MPEFLGPIAGFGVTLSTMFKKPETEFYPEEKRPTAPGYHGRHQLNRYADGLEKCIGCELCAWACPADAIYVEGADNTEEERFSPGERYGQVYQINYLRCIGCGLCVEACPTRALTMTNEYEMVDDNRAGLIYEKDRLLAPLKTDMTAPPHALRPGTTQDDYYRGDITAVPEQAAPEQAAPEQPAPEREPNPETEK</sequence>